<gene>
    <name evidence="11" type="primary">let-502</name>
    <name type="ORF">CBG03960</name>
</gene>
<organism>
    <name type="scientific">Caenorhabditis briggsae</name>
    <dbReference type="NCBI Taxonomy" id="6238"/>
    <lineage>
        <taxon>Eukaryota</taxon>
        <taxon>Metazoa</taxon>
        <taxon>Ecdysozoa</taxon>
        <taxon>Nematoda</taxon>
        <taxon>Chromadorea</taxon>
        <taxon>Rhabditida</taxon>
        <taxon>Rhabditina</taxon>
        <taxon>Rhabditomorpha</taxon>
        <taxon>Rhabditoidea</taxon>
        <taxon>Rhabditidae</taxon>
        <taxon>Peloderinae</taxon>
        <taxon>Caenorhabditis</taxon>
    </lineage>
</organism>
<name>ROCK_CAEBR</name>
<dbReference type="EC" id="2.7.11.1"/>
<dbReference type="EMBL" id="HE600906">
    <property type="protein sequence ID" value="CAP24762.2"/>
    <property type="molecule type" value="Genomic_DNA"/>
</dbReference>
<dbReference type="SMR" id="A8WVU9"/>
<dbReference type="FunCoup" id="A8WVU9">
    <property type="interactions" value="2242"/>
</dbReference>
<dbReference type="STRING" id="6238.A8WVU9"/>
<dbReference type="WormBase" id="CBG03960">
    <property type="protein sequence ID" value="CBP01010"/>
    <property type="gene ID" value="WBGene00026716"/>
    <property type="gene designation" value="Cbr-let-502"/>
</dbReference>
<dbReference type="eggNOG" id="KOG0612">
    <property type="taxonomic scope" value="Eukaryota"/>
</dbReference>
<dbReference type="HOGENOM" id="CLU_000288_140_0_1"/>
<dbReference type="InParanoid" id="A8WVU9"/>
<dbReference type="OMA" id="AFECKNC"/>
<dbReference type="Proteomes" id="UP000008549">
    <property type="component" value="Unassembled WGS sequence"/>
</dbReference>
<dbReference type="GO" id="GO:0032154">
    <property type="term" value="C:cleavage furrow"/>
    <property type="evidence" value="ECO:0007669"/>
    <property type="project" value="UniProtKB-SubCell"/>
</dbReference>
<dbReference type="GO" id="GO:0005737">
    <property type="term" value="C:cytoplasm"/>
    <property type="evidence" value="ECO:0000318"/>
    <property type="project" value="GO_Central"/>
</dbReference>
<dbReference type="GO" id="GO:0005856">
    <property type="term" value="C:cytoskeleton"/>
    <property type="evidence" value="ECO:0000318"/>
    <property type="project" value="GO_Central"/>
</dbReference>
<dbReference type="GO" id="GO:0005524">
    <property type="term" value="F:ATP binding"/>
    <property type="evidence" value="ECO:0007669"/>
    <property type="project" value="UniProtKB-KW"/>
</dbReference>
<dbReference type="GO" id="GO:0106310">
    <property type="term" value="F:protein serine kinase activity"/>
    <property type="evidence" value="ECO:0007669"/>
    <property type="project" value="RHEA"/>
</dbReference>
<dbReference type="GO" id="GO:0072518">
    <property type="term" value="F:Rho-dependent protein serine/threonine kinase activity"/>
    <property type="evidence" value="ECO:0000318"/>
    <property type="project" value="GO_Central"/>
</dbReference>
<dbReference type="GO" id="GO:0031267">
    <property type="term" value="F:small GTPase binding"/>
    <property type="evidence" value="ECO:0007669"/>
    <property type="project" value="InterPro"/>
</dbReference>
<dbReference type="GO" id="GO:0008270">
    <property type="term" value="F:zinc ion binding"/>
    <property type="evidence" value="ECO:0007669"/>
    <property type="project" value="UniProtKB-KW"/>
</dbReference>
<dbReference type="GO" id="GO:0031032">
    <property type="term" value="P:actomyosin structure organization"/>
    <property type="evidence" value="ECO:0000318"/>
    <property type="project" value="GO_Central"/>
</dbReference>
<dbReference type="GO" id="GO:0030866">
    <property type="term" value="P:cortical actin cytoskeleton organization"/>
    <property type="evidence" value="ECO:0000318"/>
    <property type="project" value="GO_Central"/>
</dbReference>
<dbReference type="GO" id="GO:0048598">
    <property type="term" value="P:embryonic morphogenesis"/>
    <property type="evidence" value="ECO:0000318"/>
    <property type="project" value="GO_Central"/>
</dbReference>
<dbReference type="GO" id="GO:0000281">
    <property type="term" value="P:mitotic cytokinesis"/>
    <property type="evidence" value="ECO:0000318"/>
    <property type="project" value="GO_Central"/>
</dbReference>
<dbReference type="GO" id="GO:0048477">
    <property type="term" value="P:oogenesis"/>
    <property type="evidence" value="ECO:0007669"/>
    <property type="project" value="UniProtKB-KW"/>
</dbReference>
<dbReference type="GO" id="GO:0032956">
    <property type="term" value="P:regulation of actin cytoskeleton organization"/>
    <property type="evidence" value="ECO:0000318"/>
    <property type="project" value="GO_Central"/>
</dbReference>
<dbReference type="GO" id="GO:1901888">
    <property type="term" value="P:regulation of cell junction assembly"/>
    <property type="evidence" value="ECO:0000318"/>
    <property type="project" value="GO_Central"/>
</dbReference>
<dbReference type="GO" id="GO:0007266">
    <property type="term" value="P:Rho protein signal transduction"/>
    <property type="evidence" value="ECO:0000318"/>
    <property type="project" value="GO_Central"/>
</dbReference>
<dbReference type="CDD" id="cd20813">
    <property type="entry name" value="C1_ROCK"/>
    <property type="match status" value="1"/>
</dbReference>
<dbReference type="FunFam" id="1.10.510.10:FF:000047">
    <property type="entry name" value="Rho-associated protein kinase 1"/>
    <property type="match status" value="1"/>
</dbReference>
<dbReference type="FunFam" id="3.30.200.20:FF:000072">
    <property type="entry name" value="Rho-associated protein kinase 2"/>
    <property type="match status" value="1"/>
</dbReference>
<dbReference type="Gene3D" id="3.30.60.20">
    <property type="match status" value="1"/>
</dbReference>
<dbReference type="Gene3D" id="3.30.200.20">
    <property type="entry name" value="Phosphorylase Kinase, domain 1"/>
    <property type="match status" value="1"/>
</dbReference>
<dbReference type="Gene3D" id="2.30.29.30">
    <property type="entry name" value="Pleckstrin-homology domain (PH domain)/Phosphotyrosine-binding domain (PTB)"/>
    <property type="match status" value="1"/>
</dbReference>
<dbReference type="Gene3D" id="1.10.510.10">
    <property type="entry name" value="Transferase(Phosphotransferase) domain 1"/>
    <property type="match status" value="1"/>
</dbReference>
<dbReference type="InterPro" id="IPR000961">
    <property type="entry name" value="AGC-kinase_C"/>
</dbReference>
<dbReference type="InterPro" id="IPR046349">
    <property type="entry name" value="C1-like_sf"/>
</dbReference>
<dbReference type="InterPro" id="IPR011009">
    <property type="entry name" value="Kinase-like_dom_sf"/>
</dbReference>
<dbReference type="InterPro" id="IPR002219">
    <property type="entry name" value="PE/DAG-bd"/>
</dbReference>
<dbReference type="InterPro" id="IPR011993">
    <property type="entry name" value="PH-like_dom_sf"/>
</dbReference>
<dbReference type="InterPro" id="IPR000719">
    <property type="entry name" value="Prot_kinase_dom"/>
</dbReference>
<dbReference type="InterPro" id="IPR017441">
    <property type="entry name" value="Protein_kinase_ATP_BS"/>
</dbReference>
<dbReference type="InterPro" id="IPR050839">
    <property type="entry name" value="Rho-assoc_Ser/Thr_Kinase"/>
</dbReference>
<dbReference type="InterPro" id="IPR015008">
    <property type="entry name" value="ROCK_Rho-bd_dom"/>
</dbReference>
<dbReference type="InterPro" id="IPR008271">
    <property type="entry name" value="Ser/Thr_kinase_AS"/>
</dbReference>
<dbReference type="PANTHER" id="PTHR22988">
    <property type="entry name" value="MYOTONIC DYSTROPHY S/T KINASE-RELATED"/>
    <property type="match status" value="1"/>
</dbReference>
<dbReference type="PANTHER" id="PTHR22988:SF73">
    <property type="entry name" value="RHO-ASSOCIATED PROTEIN KINASE"/>
    <property type="match status" value="1"/>
</dbReference>
<dbReference type="Pfam" id="PF00069">
    <property type="entry name" value="Pkinase"/>
    <property type="match status" value="1"/>
</dbReference>
<dbReference type="SMART" id="SM00109">
    <property type="entry name" value="C1"/>
    <property type="match status" value="1"/>
</dbReference>
<dbReference type="SMART" id="SM00133">
    <property type="entry name" value="S_TK_X"/>
    <property type="match status" value="1"/>
</dbReference>
<dbReference type="SMART" id="SM00220">
    <property type="entry name" value="S_TKc"/>
    <property type="match status" value="1"/>
</dbReference>
<dbReference type="SUPFAM" id="SSF57889">
    <property type="entry name" value="Cysteine-rich domain"/>
    <property type="match status" value="1"/>
</dbReference>
<dbReference type="SUPFAM" id="SSF56112">
    <property type="entry name" value="Protein kinase-like (PK-like)"/>
    <property type="match status" value="1"/>
</dbReference>
<dbReference type="PROSITE" id="PS51285">
    <property type="entry name" value="AGC_KINASE_CTER"/>
    <property type="match status" value="1"/>
</dbReference>
<dbReference type="PROSITE" id="PS00107">
    <property type="entry name" value="PROTEIN_KINASE_ATP"/>
    <property type="match status" value="1"/>
</dbReference>
<dbReference type="PROSITE" id="PS50011">
    <property type="entry name" value="PROTEIN_KINASE_DOM"/>
    <property type="match status" value="1"/>
</dbReference>
<dbReference type="PROSITE" id="PS00108">
    <property type="entry name" value="PROTEIN_KINASE_ST"/>
    <property type="match status" value="1"/>
</dbReference>
<dbReference type="PROSITE" id="PS51859">
    <property type="entry name" value="RHO_BD"/>
    <property type="match status" value="1"/>
</dbReference>
<dbReference type="PROSITE" id="PS50081">
    <property type="entry name" value="ZF_DAG_PE_2"/>
    <property type="match status" value="1"/>
</dbReference>
<evidence type="ECO:0000250" key="1"/>
<evidence type="ECO:0000250" key="2">
    <source>
        <dbReference type="UniProtKB" id="P28523"/>
    </source>
</evidence>
<evidence type="ECO:0000250" key="3">
    <source>
        <dbReference type="UniProtKB" id="P92199"/>
    </source>
</evidence>
<evidence type="ECO:0000250" key="4">
    <source>
        <dbReference type="UniProtKB" id="Q13464"/>
    </source>
</evidence>
<evidence type="ECO:0000255" key="5"/>
<evidence type="ECO:0000255" key="6">
    <source>
        <dbReference type="PROSITE-ProRule" id="PRU00159"/>
    </source>
</evidence>
<evidence type="ECO:0000255" key="7">
    <source>
        <dbReference type="PROSITE-ProRule" id="PRU00226"/>
    </source>
</evidence>
<evidence type="ECO:0000255" key="8">
    <source>
        <dbReference type="PROSITE-ProRule" id="PRU00618"/>
    </source>
</evidence>
<evidence type="ECO:0000255" key="9">
    <source>
        <dbReference type="PROSITE-ProRule" id="PRU01206"/>
    </source>
</evidence>
<evidence type="ECO:0000255" key="10">
    <source>
        <dbReference type="PROSITE-ProRule" id="PRU10027"/>
    </source>
</evidence>
<evidence type="ECO:0000312" key="11">
    <source>
        <dbReference type="EMBL" id="CAP24762.2"/>
    </source>
</evidence>
<sequence>MEQDELLHQLVDPKSPINIESLLDTITALVNDCKIPVLMRMKSVDNFISRYERIVESVAALRMKATDFRQLKVIGRGAFGEVHLVRHTRTNTVYAMKMLNKDDMIKRADSAFFWEERDIMAHANSEWIVRLQYAFQDPRHLYMVMEYMPGGDLVNLMTSYEVSEKWTRFYTAEIVEALAALHNMGYIHRDVKPDNMLISRSGHIKLADFGTCVKMNSNGVVRCSTAVGTPDYISPEVLRNQGKDSEFGKEVDWWSVGVFIYEMLVGETPFYAEALVSTYANIMNHQTSLRFPDEPLISTQAKDIIKKFLSAAPERLGKNNVDEIRNHKFFKNDEWTFETLKDATPPIVPSLKSDDDTTHFEEIETRDRDNASDFQLPKTFNGNQLPFIGFTYSNEYSPVKKLLNGASSNGVQNGVENKPVVVQQPLTNGHSTGIPEEQYEEVVIELDSKKRELESLKDSISRTEIRAKLIETEKNSLSSKINDLERELKDNKERLRLGADSDTKVNELSVELRMSKEYNGEMENELSKFRDKCEQLKEDLRKKSGELAQEKNETQRVLQQKKNAEEAFAEIKRDHEMLQTREAEKSLQLKKALDERKENGAYQQSVAKATDAEWERKMQYYEKQLEQATDDRKREEQKRTAAEFDQSRVARKLAGIEANYELLQNDYTNMKEARKDLERDLQDVIAEKRRLEIRVEQLMDSRNTDERVLNLCQEELLESQEEAKYKEDGLRGKIDGIRNELENEKMKSQTLEENLIVADKERGMLKMEVQELMQRHKWEMANKEQNLKHIENQLEELKEHSRIESTEQESNDKKTIADLNKKLELEKAHKKAVINKLEEEMAKRQPLKKGDKGITKSALIKKEREIVGFKKCRTGRILMSLQQENQHLQQKMTEMYMDSEKQGEHFSYQMQEMSQLIETLRDELKEYKDEYPQRHSVNRYEDKRSLDSREGIPTSISHQNIQIDGWLSLRDMTKKSRKPKVVFKKKSDHQLTLFFQWTNYFVILNEYAFTIYTDEKHLNSVVLTIEAGAMAHVRHVTSADLRNVDDNQLPKIFHIMYDDTSSNSSRHASNSDLSICEPREEGWKRHDFQELSYHTRTYCDDCGKKLSDFIRPTPAFECKNCHYKTHKEHIAQGTITMCRYTGLSRELVLMGTHKEVCNQWVSQLRRFIEASRPANVSVSRVSSRRHVGGPGSSA</sequence>
<protein>
    <recommendedName>
        <fullName evidence="3 4">Rho-associated protein kinase let-502</fullName>
        <ecNumber>2.7.11.1</ecNumber>
    </recommendedName>
    <alternativeName>
        <fullName evidence="3">Lethal protein 502</fullName>
    </alternativeName>
    <alternativeName>
        <fullName evidence="3">Rho-binding kinase let-502</fullName>
    </alternativeName>
</protein>
<feature type="chain" id="PRO_0000389425" description="Rho-associated protein kinase let-502">
    <location>
        <begin position="1"/>
        <end position="1194"/>
    </location>
</feature>
<feature type="domain" description="Protein kinase" evidence="6">
    <location>
        <begin position="68"/>
        <end position="330"/>
    </location>
</feature>
<feature type="domain" description="AGC-kinase C-terminal" evidence="8">
    <location>
        <begin position="331"/>
        <end position="402"/>
    </location>
</feature>
<feature type="domain" description="RhoBD" evidence="9">
    <location>
        <begin position="784"/>
        <end position="846"/>
    </location>
</feature>
<feature type="domain" description="PH" evidence="5">
    <location>
        <begin position="961"/>
        <end position="1171"/>
    </location>
</feature>
<feature type="zinc finger region" description="Phorbol-ester/DAG-type" evidence="7">
    <location>
        <begin position="1085"/>
        <end position="1138"/>
    </location>
</feature>
<feature type="coiled-coil region" evidence="5">
    <location>
        <begin position="436"/>
        <end position="844"/>
    </location>
</feature>
<feature type="coiled-coil region" evidence="5">
    <location>
        <begin position="875"/>
        <end position="933"/>
    </location>
</feature>
<feature type="active site" description="Proton acceptor" evidence="2 6 10">
    <location>
        <position position="190"/>
    </location>
</feature>
<feature type="binding site" evidence="2 6">
    <location>
        <begin position="74"/>
        <end position="82"/>
    </location>
    <ligand>
        <name>ATP</name>
        <dbReference type="ChEBI" id="CHEBI:30616"/>
    </ligand>
</feature>
<feature type="binding site" evidence="2 6">
    <location>
        <position position="97"/>
    </location>
    <ligand>
        <name>ATP</name>
        <dbReference type="ChEBI" id="CHEBI:30616"/>
    </ligand>
</feature>
<proteinExistence type="inferred from homology"/>
<accession>A8WVU9</accession>
<comment type="function">
    <text evidence="3">Negatively regulates mel-11 to relieve the inhibition of mlc-4, allowing contraction of the circumferentially oriented microfilaments in epidermal cells and thereby regulating myosin II contractility during spermathecal contraction, cleavage furrow contraction in early embryos, and embryonic elongation and morphogenesis. Required for P-cell migration. May also play a role in oocyte cellularization (By similarity).</text>
</comment>
<comment type="catalytic activity">
    <reaction evidence="4">
        <text>L-seryl-[protein] + ATP = O-phospho-L-seryl-[protein] + ADP + H(+)</text>
        <dbReference type="Rhea" id="RHEA:17989"/>
        <dbReference type="Rhea" id="RHEA-COMP:9863"/>
        <dbReference type="Rhea" id="RHEA-COMP:11604"/>
        <dbReference type="ChEBI" id="CHEBI:15378"/>
        <dbReference type="ChEBI" id="CHEBI:29999"/>
        <dbReference type="ChEBI" id="CHEBI:30616"/>
        <dbReference type="ChEBI" id="CHEBI:83421"/>
        <dbReference type="ChEBI" id="CHEBI:456216"/>
        <dbReference type="EC" id="2.7.11.1"/>
    </reaction>
</comment>
<comment type="catalytic activity">
    <reaction evidence="4">
        <text>L-threonyl-[protein] + ATP = O-phospho-L-threonyl-[protein] + ADP + H(+)</text>
        <dbReference type="Rhea" id="RHEA:46608"/>
        <dbReference type="Rhea" id="RHEA-COMP:11060"/>
        <dbReference type="Rhea" id="RHEA-COMP:11605"/>
        <dbReference type="ChEBI" id="CHEBI:15378"/>
        <dbReference type="ChEBI" id="CHEBI:30013"/>
        <dbReference type="ChEBI" id="CHEBI:30616"/>
        <dbReference type="ChEBI" id="CHEBI:61977"/>
        <dbReference type="ChEBI" id="CHEBI:456216"/>
        <dbReference type="EC" id="2.7.11.1"/>
    </reaction>
</comment>
<comment type="cofactor">
    <cofactor evidence="4">
        <name>Mg(2+)</name>
        <dbReference type="ChEBI" id="CHEBI:18420"/>
    </cofactor>
</comment>
<comment type="activity regulation">
    <text evidence="3">Activated by rho-1 binding.</text>
</comment>
<comment type="subunit">
    <text evidence="3">Interacts with rho-1.</text>
</comment>
<comment type="subcellular location">
    <subcellularLocation>
        <location evidence="1">Cytoplasm</location>
    </subcellularLocation>
    <subcellularLocation>
        <location evidence="1">Cytoplasm</location>
        <location evidence="1">Cytoskeleton</location>
    </subcellularLocation>
    <subcellularLocation>
        <location evidence="1">Cleavage furrow</location>
    </subcellularLocation>
    <text evidence="3">Colocalizes with nmy-2 myosin thick filaments at the cleavage furrow.</text>
</comment>
<comment type="similarity">
    <text evidence="5">Belongs to the protein kinase superfamily. AGC Ser/Thr protein kinase family.</text>
</comment>
<keyword id="KW-0067">ATP-binding</keyword>
<keyword id="KW-0175">Coiled coil</keyword>
<keyword id="KW-0963">Cytoplasm</keyword>
<keyword id="KW-0206">Cytoskeleton</keyword>
<keyword id="KW-0217">Developmental protein</keyword>
<keyword id="KW-0221">Differentiation</keyword>
<keyword id="KW-0418">Kinase</keyword>
<keyword id="KW-0460">Magnesium</keyword>
<keyword id="KW-0479">Metal-binding</keyword>
<keyword id="KW-0547">Nucleotide-binding</keyword>
<keyword id="KW-0896">Oogenesis</keyword>
<keyword id="KW-0597">Phosphoprotein</keyword>
<keyword id="KW-1185">Reference proteome</keyword>
<keyword id="KW-0723">Serine/threonine-protein kinase</keyword>
<keyword id="KW-0808">Transferase</keyword>
<keyword id="KW-0862">Zinc</keyword>
<keyword id="KW-0863">Zinc-finger</keyword>
<reference evidence="11" key="1">
    <citation type="journal article" date="2003" name="PLoS Biol.">
        <title>The genome sequence of Caenorhabditis briggsae: a platform for comparative genomics.</title>
        <authorList>
            <person name="Stein L.D."/>
            <person name="Bao Z."/>
            <person name="Blasiar D."/>
            <person name="Blumenthal T."/>
            <person name="Brent M.R."/>
            <person name="Chen N."/>
            <person name="Chinwalla A."/>
            <person name="Clarke L."/>
            <person name="Clee C."/>
            <person name="Coghlan A."/>
            <person name="Coulson A."/>
            <person name="D'Eustachio P."/>
            <person name="Fitch D.H.A."/>
            <person name="Fulton L.A."/>
            <person name="Fulton R.E."/>
            <person name="Griffiths-Jones S."/>
            <person name="Harris T.W."/>
            <person name="Hillier L.W."/>
            <person name="Kamath R."/>
            <person name="Kuwabara P.E."/>
            <person name="Mardis E.R."/>
            <person name="Marra M.A."/>
            <person name="Miner T.L."/>
            <person name="Minx P."/>
            <person name="Mullikin J.C."/>
            <person name="Plumb R.W."/>
            <person name="Rogers J."/>
            <person name="Schein J.E."/>
            <person name="Sohrmann M."/>
            <person name="Spieth J."/>
            <person name="Stajich J.E."/>
            <person name="Wei C."/>
            <person name="Willey D."/>
            <person name="Wilson R.K."/>
            <person name="Durbin R.M."/>
            <person name="Waterston R.H."/>
        </authorList>
    </citation>
    <scope>NUCLEOTIDE SEQUENCE [LARGE SCALE GENOMIC DNA]</scope>
    <source>
        <strain evidence="11">AF16</strain>
    </source>
</reference>